<dbReference type="EMBL" id="BC119930">
    <property type="protein sequence ID" value="AAI19931.1"/>
    <property type="molecule type" value="mRNA"/>
</dbReference>
<dbReference type="RefSeq" id="NP_001069862.1">
    <property type="nucleotide sequence ID" value="NM_001076394.1"/>
</dbReference>
<dbReference type="BMRB" id="Q0VCY7"/>
<dbReference type="SMR" id="Q0VCY7"/>
<dbReference type="FunCoup" id="Q0VCY7">
    <property type="interactions" value="4154"/>
</dbReference>
<dbReference type="STRING" id="9913.ENSBTAP00000059261"/>
<dbReference type="iPTMnet" id="Q0VCY7"/>
<dbReference type="PaxDb" id="9913-ENSBTAP00000046374"/>
<dbReference type="PeptideAtlas" id="Q0VCY7"/>
<dbReference type="Ensembl" id="ENSBTAT00000049486.2">
    <property type="protein sequence ID" value="ENSBTAP00000046374.1"/>
    <property type="gene ID" value="ENSBTAG00000014766.5"/>
</dbReference>
<dbReference type="GeneID" id="615796"/>
<dbReference type="KEGG" id="bta:615796"/>
<dbReference type="CTD" id="6426"/>
<dbReference type="VEuPathDB" id="HostDB:ENSBTAG00000014766"/>
<dbReference type="VGNC" id="VGNC:35297">
    <property type="gene designation" value="SRSF1"/>
</dbReference>
<dbReference type="eggNOG" id="KOG0105">
    <property type="taxonomic scope" value="Eukaryota"/>
</dbReference>
<dbReference type="GeneTree" id="ENSGT00940000155585"/>
<dbReference type="HOGENOM" id="CLU_012062_34_0_1"/>
<dbReference type="InParanoid" id="Q0VCY7"/>
<dbReference type="OMA" id="PREPAYP"/>
<dbReference type="OrthoDB" id="1099063at2759"/>
<dbReference type="TreeFam" id="TF106261"/>
<dbReference type="Reactome" id="R-BTA-159236">
    <property type="pathway name" value="Transport of Mature mRNA derived from an Intron-Containing Transcript"/>
</dbReference>
<dbReference type="Reactome" id="R-BTA-72163">
    <property type="pathway name" value="mRNA Splicing - Major Pathway"/>
</dbReference>
<dbReference type="Reactome" id="R-BTA-72165">
    <property type="pathway name" value="mRNA Splicing - Minor Pathway"/>
</dbReference>
<dbReference type="Reactome" id="R-BTA-72187">
    <property type="pathway name" value="mRNA 3'-end processing"/>
</dbReference>
<dbReference type="Reactome" id="R-BTA-72203">
    <property type="pathway name" value="Processing of Capped Intron-Containing Pre-mRNA"/>
</dbReference>
<dbReference type="Reactome" id="R-BTA-73856">
    <property type="pathway name" value="RNA Polymerase II Transcription Termination"/>
</dbReference>
<dbReference type="Proteomes" id="UP000009136">
    <property type="component" value="Chromosome 19"/>
</dbReference>
<dbReference type="Bgee" id="ENSBTAG00000014766">
    <property type="expression patterns" value="Expressed in thymus and 107 other cell types or tissues"/>
</dbReference>
<dbReference type="GO" id="GO:0005737">
    <property type="term" value="C:cytoplasm"/>
    <property type="evidence" value="ECO:0000250"/>
    <property type="project" value="UniProtKB"/>
</dbReference>
<dbReference type="GO" id="GO:0016607">
    <property type="term" value="C:nuclear speck"/>
    <property type="evidence" value="ECO:0000250"/>
    <property type="project" value="UniProtKB"/>
</dbReference>
<dbReference type="GO" id="GO:0005654">
    <property type="term" value="C:nucleoplasm"/>
    <property type="evidence" value="ECO:0000250"/>
    <property type="project" value="UniProtKB"/>
</dbReference>
<dbReference type="GO" id="GO:0005634">
    <property type="term" value="C:nucleus"/>
    <property type="evidence" value="ECO:0000250"/>
    <property type="project" value="UniProtKB"/>
</dbReference>
<dbReference type="GO" id="GO:0005681">
    <property type="term" value="C:spliceosomal complex"/>
    <property type="evidence" value="ECO:0007669"/>
    <property type="project" value="UniProtKB-KW"/>
</dbReference>
<dbReference type="GO" id="GO:0003729">
    <property type="term" value="F:mRNA binding"/>
    <property type="evidence" value="ECO:0000318"/>
    <property type="project" value="GO_Central"/>
</dbReference>
<dbReference type="GO" id="GO:0003723">
    <property type="term" value="F:RNA binding"/>
    <property type="evidence" value="ECO:0000250"/>
    <property type="project" value="UniProtKB"/>
</dbReference>
<dbReference type="GO" id="GO:0000380">
    <property type="term" value="P:alternative mRNA splicing, via spliceosome"/>
    <property type="evidence" value="ECO:0000318"/>
    <property type="project" value="GO_Central"/>
</dbReference>
<dbReference type="GO" id="GO:0000395">
    <property type="term" value="P:mRNA 5'-splice site recognition"/>
    <property type="evidence" value="ECO:0000250"/>
    <property type="project" value="UniProtKB"/>
</dbReference>
<dbReference type="GO" id="GO:0051028">
    <property type="term" value="P:mRNA transport"/>
    <property type="evidence" value="ECO:0007669"/>
    <property type="project" value="UniProtKB-KW"/>
</dbReference>
<dbReference type="GO" id="GO:0043484">
    <property type="term" value="P:regulation of RNA splicing"/>
    <property type="evidence" value="ECO:0000250"/>
    <property type="project" value="UniProtKB"/>
</dbReference>
<dbReference type="CDD" id="cd12597">
    <property type="entry name" value="RRM1_SRSF1"/>
    <property type="match status" value="1"/>
</dbReference>
<dbReference type="CDD" id="cd12767">
    <property type="entry name" value="RRM2_SRSF1"/>
    <property type="match status" value="1"/>
</dbReference>
<dbReference type="FunFam" id="3.30.70.330:FF:000053">
    <property type="entry name" value="Serine/arginine-rich splicing factor 1"/>
    <property type="match status" value="1"/>
</dbReference>
<dbReference type="FunFam" id="3.30.70.330:FF:000170">
    <property type="entry name" value="Serine/arginine-rich splicing factor 1"/>
    <property type="match status" value="1"/>
</dbReference>
<dbReference type="Gene3D" id="3.30.70.330">
    <property type="match status" value="2"/>
</dbReference>
<dbReference type="InterPro" id="IPR012677">
    <property type="entry name" value="Nucleotide-bd_a/b_plait_sf"/>
</dbReference>
<dbReference type="InterPro" id="IPR035979">
    <property type="entry name" value="RBD_domain_sf"/>
</dbReference>
<dbReference type="InterPro" id="IPR000504">
    <property type="entry name" value="RRM_dom"/>
</dbReference>
<dbReference type="InterPro" id="IPR050374">
    <property type="entry name" value="RRT5_SRSF_SR"/>
</dbReference>
<dbReference type="InterPro" id="IPR034520">
    <property type="entry name" value="SRSF1_RRM1"/>
</dbReference>
<dbReference type="InterPro" id="IPR029538">
    <property type="entry name" value="SRSF1_RRM2"/>
</dbReference>
<dbReference type="PANTHER" id="PTHR23003">
    <property type="entry name" value="RNA RECOGNITION MOTIF RRM DOMAIN CONTAINING PROTEIN"/>
    <property type="match status" value="1"/>
</dbReference>
<dbReference type="PANTHER" id="PTHR23003:SF66">
    <property type="entry name" value="SERINE_ARGININE-RICH SPLICING FACTOR 1"/>
    <property type="match status" value="1"/>
</dbReference>
<dbReference type="Pfam" id="PF00076">
    <property type="entry name" value="RRM_1"/>
    <property type="match status" value="2"/>
</dbReference>
<dbReference type="SMART" id="SM00360">
    <property type="entry name" value="RRM"/>
    <property type="match status" value="2"/>
</dbReference>
<dbReference type="SUPFAM" id="SSF54928">
    <property type="entry name" value="RNA-binding domain, RBD"/>
    <property type="match status" value="1"/>
</dbReference>
<dbReference type="PROSITE" id="PS50102">
    <property type="entry name" value="RRM"/>
    <property type="match status" value="2"/>
</dbReference>
<gene>
    <name type="primary">SRSF1</name>
    <name type="synonym">SFRS1</name>
</gene>
<proteinExistence type="evidence at transcript level"/>
<organism>
    <name type="scientific">Bos taurus</name>
    <name type="common">Bovine</name>
    <dbReference type="NCBI Taxonomy" id="9913"/>
    <lineage>
        <taxon>Eukaryota</taxon>
        <taxon>Metazoa</taxon>
        <taxon>Chordata</taxon>
        <taxon>Craniata</taxon>
        <taxon>Vertebrata</taxon>
        <taxon>Euteleostomi</taxon>
        <taxon>Mammalia</taxon>
        <taxon>Eutheria</taxon>
        <taxon>Laurasiatheria</taxon>
        <taxon>Artiodactyla</taxon>
        <taxon>Ruminantia</taxon>
        <taxon>Pecora</taxon>
        <taxon>Bovidae</taxon>
        <taxon>Bovinae</taxon>
        <taxon>Bos</taxon>
    </lineage>
</organism>
<keyword id="KW-0007">Acetylation</keyword>
<keyword id="KW-0963">Cytoplasm</keyword>
<keyword id="KW-1017">Isopeptide bond</keyword>
<keyword id="KW-0488">Methylation</keyword>
<keyword id="KW-0507">mRNA processing</keyword>
<keyword id="KW-0508">mRNA splicing</keyword>
<keyword id="KW-0509">mRNA transport</keyword>
<keyword id="KW-0539">Nucleus</keyword>
<keyword id="KW-0597">Phosphoprotein</keyword>
<keyword id="KW-1185">Reference proteome</keyword>
<keyword id="KW-0677">Repeat</keyword>
<keyword id="KW-0694">RNA-binding</keyword>
<keyword id="KW-0747">Spliceosome</keyword>
<keyword id="KW-0813">Transport</keyword>
<keyword id="KW-0832">Ubl conjugation</keyword>
<reference key="1">
    <citation type="submission" date="2006-08" db="EMBL/GenBank/DDBJ databases">
        <authorList>
            <consortium name="NIH - Mammalian Gene Collection (MGC) project"/>
        </authorList>
    </citation>
    <scope>NUCLEOTIDE SEQUENCE [LARGE SCALE MRNA]</scope>
    <source>
        <strain>Hereford</strain>
        <tissue>Fetal skin</tissue>
    </source>
</reference>
<evidence type="ECO:0000250" key="1"/>
<evidence type="ECO:0000250" key="2">
    <source>
        <dbReference type="UniProtKB" id="Q07955"/>
    </source>
</evidence>
<evidence type="ECO:0000250" key="3">
    <source>
        <dbReference type="UniProtKB" id="Q6PDM2"/>
    </source>
</evidence>
<evidence type="ECO:0000255" key="4"/>
<evidence type="ECO:0000255" key="5">
    <source>
        <dbReference type="PROSITE-ProRule" id="PRU00176"/>
    </source>
</evidence>
<evidence type="ECO:0000256" key="6">
    <source>
        <dbReference type="SAM" id="MobiDB-lite"/>
    </source>
</evidence>
<evidence type="ECO:0000305" key="7"/>
<comment type="function">
    <text evidence="2">Plays a role in preventing exon skipping, ensuring the accuracy of splicing and regulating alternative splicing. Interacts with other spliceosomal components, via the RS domains, to form a bridge between the 5'- and 3'-splice site binding components, U1 snRNP and U2AF. Can stimulate binding of U1 snRNP to a 5'-splice site-containing pre-mRNA. Binds to purine-rich RNA sequences, either the octamer, 5'-RGAAGAAC-3' (r=A or G) or the decamers, AGGACAGAGC/AGGACGAAGC. Binds preferentially to the 5'-CGAGGCG-3' motif in vitro. Three copies of the octamer constitute a powerful splicing enhancer in vitro, the ASF/SF2 splicing enhancer (ASE) which can specifically activate ASE-dependent splicing. May function as export adapter involved in mRNA nuclear export through the TAP/NXF1 pathway (By similarity).</text>
</comment>
<comment type="subunit">
    <text evidence="2 3">Consists of two polypeptides of p32 and p33. Identified in the spliceosome C complex. Component of a ribonucleoprotein complex containing mRNAs and RNA-binding proteins including DDX5, HNRNPH2 and SRSF1 as well as splicing regulator ARVCF. In vitro, self-associates and binds SRSF2, SNRNP70 and U2AF1 but not U2AF2. Binds SREK1/SFRS12. Interacts with SAFB/SAFB1. Interacts with PSIP1/LEDGF. Interacts with RSRC1 (via Arg/Ser-rich domain). Interacts with ZRSR2/U2AF1-RS2. Interacts with CCDC55 (via C-terminus). Interacts with SRPK1 and a sliding docking interaction is essential for its sequential and processive phosphorylation by SRPK1. Interacts with NXF1. Interacts with CCNL1, CCNL2 and CDK11B. Interacts with RRP1B. Interacts (when phosphorylated in its RS domain) with TNPO3; promoting nuclear import. Interacts with ILDR1 (via C-terminus) and ILDR2.</text>
</comment>
<comment type="subcellular location">
    <subcellularLocation>
        <location evidence="2">Cytoplasm</location>
    </subcellularLocation>
    <subcellularLocation>
        <location evidence="2">Nucleus speckle</location>
    </subcellularLocation>
    <text evidence="2">In nuclear speckles. Shuttles between the nucleus and the cytoplasm. Nuclear import is mediated via interaction with TNPO3.</text>
</comment>
<comment type="domain">
    <text evidence="2">The RRM 2 domain plays an important role in governing both the binding mode and the phosphorylation mechanism of the RS domain by SRPK1. RS domain and RRM 2 are uniquely positioned to initiate a highly directional (C-terminus to N-terminus) phosphorylation reaction in which the RS domain slides through an extended electronegative channel separating the docking groove of SRPK1 and the active site. RRM 2 binds toward the periphery of the active site and guides the directional phosphorylation mechanism. Both the RS domain and an RRM domain are required for nucleocytoplasmic shuttling (By similarity).</text>
</comment>
<comment type="PTM">
    <text evidence="2">Phosphorylated by CLK1, CLK2, CLK3 and CLK4. Phosphorylated by SRPK1 at multiple serines in its RS domain via a directional (C-terminal to N-terminal) and a dual-track mechanism incorporating both processive phosphorylation (in which the kinase stays attached to the substrate after each round of phosphorylation) and distributive phosphorylation steps (in which the kinase and substrate dissociate after each phosphorylation event). The RS domain of SRSF1 binds to a docking groove in the large lobe of the kinase domain of SRPK1 and this induces certain structural changes in SRPK1 and/or RRM 2 domain of SRSF1, allowing RRM 2 to bind the kinase and initiate phosphorylation. The cycles continue for several phosphorylation steps in a processive manner (steps 1-8) until the last few phosphorylation steps (approximately steps 9-12). During that time, a mechanical stress induces the unfolding of the beta-4 motif in RRM 2, which then docks at the docking groove of SRPK1. This also signals RRM 2 to begin to dissociate, which facilitates SRSF1 dissociation after phosphorylation is completed (By similarity).</text>
</comment>
<comment type="PTM">
    <text evidence="2">Asymmetrically dimethylated at arginines, probably by PRMT1, methylation promotes localization to nuclear speckles.</text>
</comment>
<comment type="similarity">
    <text evidence="7">Belongs to the splicing factor SR family.</text>
</comment>
<sequence length="248" mass="27745">MSGGGVIRGPAGNNDCRIYVGNLPPDIRTKDIEDVFYKYGAIRDIDLKNRRGGPPFAFVEFEDPRDAEDAVYGRDGYDYDGYRLRVEFPRSGRGTGRGGGGGGGGGAPRGRYGPPSRRSENRVVVSGLPPSGSWQDLKDHMREAGDVCYADVYRDGTGVVEFVRKEDMTYAVRKLDNTKFRSHEGETAYIRVKVDGPRSPSYGRSRSRSRSRSRSRSRSNSRSRSYSPRRSRGSPRYSPRHSRSRSRT</sequence>
<name>SRSF1_BOVIN</name>
<accession>Q0VCY7</accession>
<protein>
    <recommendedName>
        <fullName>Serine/arginine-rich splicing factor 1</fullName>
    </recommendedName>
    <alternativeName>
        <fullName>Splicing factor, arginine/serine-rich 1</fullName>
    </alternativeName>
</protein>
<feature type="initiator methionine" description="Removed" evidence="2">
    <location>
        <position position="1"/>
    </location>
</feature>
<feature type="chain" id="PRO_0000287724" description="Serine/arginine-rich splicing factor 1">
    <location>
        <begin position="2"/>
        <end position="248"/>
    </location>
</feature>
<feature type="domain" description="RRM 1" evidence="5">
    <location>
        <begin position="16"/>
        <end position="91"/>
    </location>
</feature>
<feature type="domain" description="RRM 2" evidence="5">
    <location>
        <begin position="121"/>
        <end position="195"/>
    </location>
</feature>
<feature type="region of interest" description="Disordered" evidence="6">
    <location>
        <begin position="88"/>
        <end position="134"/>
    </location>
</feature>
<feature type="region of interest" description="Disordered" evidence="6">
    <location>
        <begin position="191"/>
        <end position="248"/>
    </location>
</feature>
<feature type="region of interest" description="Interaction with SAFB1" evidence="1">
    <location>
        <begin position="198"/>
        <end position="247"/>
    </location>
</feature>
<feature type="compositionally biased region" description="Gly residues" evidence="6">
    <location>
        <begin position="93"/>
        <end position="108"/>
    </location>
</feature>
<feature type="compositionally biased region" description="Basic residues" evidence="6">
    <location>
        <begin position="205"/>
        <end position="248"/>
    </location>
</feature>
<feature type="modified residue" description="N-acetylserine" evidence="2 4">
    <location>
        <position position="2"/>
    </location>
</feature>
<feature type="modified residue" description="Phosphoserine" evidence="2">
    <location>
        <position position="2"/>
    </location>
</feature>
<feature type="modified residue" description="N6-acetyllysine; alternate" evidence="2">
    <location>
        <position position="38"/>
    </location>
</feature>
<feature type="modified residue" description="Asymmetric dimethylarginine; alternate" evidence="2">
    <location>
        <position position="93"/>
    </location>
</feature>
<feature type="modified residue" description="Omega-N-methylarginine; alternate" evidence="2">
    <location>
        <position position="93"/>
    </location>
</feature>
<feature type="modified residue" description="Asymmetric dimethylarginine; alternate" evidence="2">
    <location>
        <position position="97"/>
    </location>
</feature>
<feature type="modified residue" description="Omega-N-methylarginine; alternate" evidence="2">
    <location>
        <position position="97"/>
    </location>
</feature>
<feature type="modified residue" description="Asymmetric dimethylarginine; alternate" evidence="2">
    <location>
        <position position="109"/>
    </location>
</feature>
<feature type="modified residue" description="Omega-N-methylarginine; alternate" evidence="2">
    <location>
        <position position="109"/>
    </location>
</feature>
<feature type="modified residue" description="Omega-N-methylarginine" evidence="2">
    <location>
        <position position="111"/>
    </location>
</feature>
<feature type="modified residue" description="Phosphoserine" evidence="2">
    <location>
        <position position="133"/>
    </location>
</feature>
<feature type="modified residue" description="N6-acetyllysine" evidence="2">
    <location>
        <position position="179"/>
    </location>
</feature>
<feature type="modified residue" description="Phosphoserine" evidence="2">
    <location>
        <position position="199"/>
    </location>
</feature>
<feature type="modified residue" description="Phosphoserine" evidence="2">
    <location>
        <position position="201"/>
    </location>
</feature>
<feature type="modified residue" description="Phosphotyrosine" evidence="2">
    <location>
        <position position="202"/>
    </location>
</feature>
<feature type="modified residue" description="Phosphoserine" evidence="2">
    <location>
        <position position="205"/>
    </location>
</feature>
<feature type="modified residue" description="Phosphoserine" evidence="2">
    <location>
        <position position="207"/>
    </location>
</feature>
<feature type="modified residue" description="Phosphoserine" evidence="2">
    <location>
        <position position="209"/>
    </location>
</feature>
<feature type="modified residue" description="Phosphoserine" evidence="2">
    <location>
        <position position="231"/>
    </location>
</feature>
<feature type="modified residue" description="Phosphoserine" evidence="2">
    <location>
        <position position="234"/>
    </location>
</feature>
<feature type="modified residue" description="Phosphoserine" evidence="2">
    <location>
        <position position="238"/>
    </location>
</feature>
<feature type="cross-link" description="Glycyl lysine isopeptide (Lys-Gly) (interchain with G-Cter in SUMO2)" evidence="2">
    <location>
        <position position="30"/>
    </location>
</feature>
<feature type="cross-link" description="Glycyl lysine isopeptide (Lys-Gly) (interchain with G-Cter in SUMO2); alternate" evidence="2">
    <location>
        <position position="38"/>
    </location>
</feature>